<evidence type="ECO:0000255" key="1">
    <source>
        <dbReference type="HAMAP-Rule" id="MF_01543"/>
    </source>
</evidence>
<proteinExistence type="inferred from homology"/>
<protein>
    <recommendedName>
        <fullName evidence="1">Formate--tetrahydrofolate ligase</fullName>
        <ecNumber evidence="1">6.3.4.3</ecNumber>
    </recommendedName>
    <alternativeName>
        <fullName evidence="1">Formyltetrahydrofolate synthetase</fullName>
        <shortName evidence="1">FHS</shortName>
        <shortName evidence="1">FTHFS</shortName>
    </alternativeName>
</protein>
<reference key="1">
    <citation type="journal article" date="2004" name="Proc. Natl. Acad. Sci. U.S.A.">
        <title>Genome sequence of Picrophilus torridus and its implications for life around pH 0.</title>
        <authorList>
            <person name="Fuetterer O."/>
            <person name="Angelov A."/>
            <person name="Liesegang H."/>
            <person name="Gottschalk G."/>
            <person name="Schleper C."/>
            <person name="Schepers B."/>
            <person name="Dock C."/>
            <person name="Antranikian G."/>
            <person name="Liebl W."/>
        </authorList>
    </citation>
    <scope>NUCLEOTIDE SEQUENCE [LARGE SCALE GENOMIC DNA]</scope>
    <source>
        <strain>ATCC 700027 / DSM 9790 / JCM 10055 / NBRC 100828 / KAW 2/3</strain>
    </source>
</reference>
<organism>
    <name type="scientific">Picrophilus torridus (strain ATCC 700027 / DSM 9790 / JCM 10055 / NBRC 100828 / KAW 2/3)</name>
    <dbReference type="NCBI Taxonomy" id="1122961"/>
    <lineage>
        <taxon>Archaea</taxon>
        <taxon>Methanobacteriati</taxon>
        <taxon>Thermoplasmatota</taxon>
        <taxon>Thermoplasmata</taxon>
        <taxon>Thermoplasmatales</taxon>
        <taxon>Picrophilaceae</taxon>
        <taxon>Picrophilus</taxon>
    </lineage>
</organism>
<sequence>MKNISEIINIPEDYYDLYGRYIAKVSLNVLDYLKNKRYGKLILVTAMTPTPAGEGKTTTAIGLGNALKLLGKNAGIAIREPSLGPCFGVKGGATGGGKSTVEPSNKINLMFTGDFPAVSAAHNLLSAVINNHMYHGNELKLDPKNIVFPRTIDMDDRSLRSIIVGSGDRSTGVMMNDKYVITAASEVMAILALSRNYNELKQRLGNIMIGYNLNKAPIFARDLKVHGAMASLLVDALRPNIAQTSEHVPAIIHTGPFGNIAHGTSSILGDIIGLKMFDYLVTEAGFGSDLGFEKFIDIVLRLSDFKLSAVVLVATVRAMRYHGGGRINEPDVNAVLRGSENLMWHVQNIKKFGFNPVVAINRHSNDTDAEINAISNILTKNGVEFSISDAYSDGGHGALDLAGKVLKSISDYNPRYIYGINDDPEEKISKIAMNVYNANSVEFSHDAVKTMKLIKDDFSDLYVCMAKTQSSISDNAKLINVPEGFTVKINGININSGSGFIIPLLGNIMTMPGLPRRPASENIDIDDYGNITGLQ</sequence>
<name>FTHS_PICTO</name>
<gene>
    <name evidence="1" type="primary">fhs</name>
    <name type="ordered locus">PTO1244</name>
</gene>
<accession>Q6KZM3</accession>
<dbReference type="EC" id="6.3.4.3" evidence="1"/>
<dbReference type="EMBL" id="AE017261">
    <property type="protein sequence ID" value="AAT43829.1"/>
    <property type="molecule type" value="Genomic_DNA"/>
</dbReference>
<dbReference type="RefSeq" id="WP_011178045.1">
    <property type="nucleotide sequence ID" value="NC_005877.1"/>
</dbReference>
<dbReference type="SMR" id="Q6KZM3"/>
<dbReference type="STRING" id="263820.PTO1244"/>
<dbReference type="PaxDb" id="263820-PTO1244"/>
<dbReference type="GeneID" id="2844250"/>
<dbReference type="KEGG" id="pto:PTO1244"/>
<dbReference type="PATRIC" id="fig|263820.9.peg.1292"/>
<dbReference type="eggNOG" id="arCOG04541">
    <property type="taxonomic scope" value="Archaea"/>
</dbReference>
<dbReference type="HOGENOM" id="CLU_003601_3_3_2"/>
<dbReference type="InParanoid" id="Q6KZM3"/>
<dbReference type="OrthoDB" id="53075at2157"/>
<dbReference type="UniPathway" id="UPA00193"/>
<dbReference type="Proteomes" id="UP000000438">
    <property type="component" value="Chromosome"/>
</dbReference>
<dbReference type="GO" id="GO:0005524">
    <property type="term" value="F:ATP binding"/>
    <property type="evidence" value="ECO:0007669"/>
    <property type="project" value="UniProtKB-UniRule"/>
</dbReference>
<dbReference type="GO" id="GO:0004329">
    <property type="term" value="F:formate-tetrahydrofolate ligase activity"/>
    <property type="evidence" value="ECO:0007669"/>
    <property type="project" value="UniProtKB-UniRule"/>
</dbReference>
<dbReference type="GO" id="GO:0035999">
    <property type="term" value="P:tetrahydrofolate interconversion"/>
    <property type="evidence" value="ECO:0007669"/>
    <property type="project" value="UniProtKB-UniRule"/>
</dbReference>
<dbReference type="CDD" id="cd00477">
    <property type="entry name" value="FTHFS"/>
    <property type="match status" value="1"/>
</dbReference>
<dbReference type="Gene3D" id="3.30.1510.10">
    <property type="entry name" value="Domain 2, N(10)-formyltetrahydrofolate synthetase"/>
    <property type="match status" value="1"/>
</dbReference>
<dbReference type="Gene3D" id="3.10.410.10">
    <property type="entry name" value="Formyltetrahydrofolate synthetase, domain 3"/>
    <property type="match status" value="1"/>
</dbReference>
<dbReference type="Gene3D" id="3.40.50.300">
    <property type="entry name" value="P-loop containing nucleotide triphosphate hydrolases"/>
    <property type="match status" value="1"/>
</dbReference>
<dbReference type="HAMAP" id="MF_01543">
    <property type="entry name" value="FTHFS"/>
    <property type="match status" value="1"/>
</dbReference>
<dbReference type="InterPro" id="IPR000559">
    <property type="entry name" value="Formate_THF_ligase"/>
</dbReference>
<dbReference type="InterPro" id="IPR020628">
    <property type="entry name" value="Formate_THF_ligase_CS"/>
</dbReference>
<dbReference type="InterPro" id="IPR027417">
    <property type="entry name" value="P-loop_NTPase"/>
</dbReference>
<dbReference type="NCBIfam" id="NF010030">
    <property type="entry name" value="PRK13505.1"/>
    <property type="match status" value="1"/>
</dbReference>
<dbReference type="Pfam" id="PF01268">
    <property type="entry name" value="FTHFS"/>
    <property type="match status" value="1"/>
</dbReference>
<dbReference type="SUPFAM" id="SSF52540">
    <property type="entry name" value="P-loop containing nucleoside triphosphate hydrolases"/>
    <property type="match status" value="1"/>
</dbReference>
<dbReference type="PROSITE" id="PS00721">
    <property type="entry name" value="FTHFS_1"/>
    <property type="match status" value="1"/>
</dbReference>
<dbReference type="PROSITE" id="PS00722">
    <property type="entry name" value="FTHFS_2"/>
    <property type="match status" value="1"/>
</dbReference>
<keyword id="KW-0067">ATP-binding</keyword>
<keyword id="KW-0436">Ligase</keyword>
<keyword id="KW-0547">Nucleotide-binding</keyword>
<keyword id="KW-0554">One-carbon metabolism</keyword>
<comment type="catalytic activity">
    <reaction evidence="1">
        <text>(6S)-5,6,7,8-tetrahydrofolate + formate + ATP = (6R)-10-formyltetrahydrofolate + ADP + phosphate</text>
        <dbReference type="Rhea" id="RHEA:20221"/>
        <dbReference type="ChEBI" id="CHEBI:15740"/>
        <dbReference type="ChEBI" id="CHEBI:30616"/>
        <dbReference type="ChEBI" id="CHEBI:43474"/>
        <dbReference type="ChEBI" id="CHEBI:57453"/>
        <dbReference type="ChEBI" id="CHEBI:195366"/>
        <dbReference type="ChEBI" id="CHEBI:456216"/>
        <dbReference type="EC" id="6.3.4.3"/>
    </reaction>
</comment>
<comment type="pathway">
    <text evidence="1">One-carbon metabolism; tetrahydrofolate interconversion.</text>
</comment>
<comment type="similarity">
    <text evidence="1">Belongs to the formate--tetrahydrofolate ligase family.</text>
</comment>
<feature type="chain" id="PRO_0000199414" description="Formate--tetrahydrofolate ligase">
    <location>
        <begin position="1"/>
        <end position="535"/>
    </location>
</feature>
<feature type="binding site" evidence="1">
    <location>
        <begin position="50"/>
        <end position="57"/>
    </location>
    <ligand>
        <name>ATP</name>
        <dbReference type="ChEBI" id="CHEBI:30616"/>
    </ligand>
</feature>